<protein>
    <recommendedName>
        <fullName evidence="1">Bifunctional protein FolD</fullName>
    </recommendedName>
    <domain>
        <recommendedName>
            <fullName evidence="1">Methylenetetrahydrofolate dehydrogenase</fullName>
            <ecNumber evidence="1">1.5.1.5</ecNumber>
        </recommendedName>
    </domain>
    <domain>
        <recommendedName>
            <fullName evidence="1">Methenyltetrahydrofolate cyclohydrolase</fullName>
            <ecNumber evidence="1">3.5.4.9</ecNumber>
        </recommendedName>
    </domain>
</protein>
<dbReference type="EC" id="1.5.1.5" evidence="1"/>
<dbReference type="EC" id="3.5.4.9" evidence="1"/>
<dbReference type="EMBL" id="AE017321">
    <property type="protein sequence ID" value="AAW70665.1"/>
    <property type="molecule type" value="Genomic_DNA"/>
</dbReference>
<dbReference type="RefSeq" id="WP_011256275.1">
    <property type="nucleotide sequence ID" value="NC_006833.1"/>
</dbReference>
<dbReference type="SMR" id="Q5GTK9"/>
<dbReference type="STRING" id="292805.Wbm0073"/>
<dbReference type="KEGG" id="wbm:Wbm0073"/>
<dbReference type="eggNOG" id="COG0190">
    <property type="taxonomic scope" value="Bacteria"/>
</dbReference>
<dbReference type="HOGENOM" id="CLU_034045_1_2_5"/>
<dbReference type="UniPathway" id="UPA00193"/>
<dbReference type="Proteomes" id="UP000000534">
    <property type="component" value="Chromosome"/>
</dbReference>
<dbReference type="GO" id="GO:0005829">
    <property type="term" value="C:cytosol"/>
    <property type="evidence" value="ECO:0007669"/>
    <property type="project" value="TreeGrafter"/>
</dbReference>
<dbReference type="GO" id="GO:0004477">
    <property type="term" value="F:methenyltetrahydrofolate cyclohydrolase activity"/>
    <property type="evidence" value="ECO:0007669"/>
    <property type="project" value="UniProtKB-UniRule"/>
</dbReference>
<dbReference type="GO" id="GO:0004488">
    <property type="term" value="F:methylenetetrahydrofolate dehydrogenase (NADP+) activity"/>
    <property type="evidence" value="ECO:0007669"/>
    <property type="project" value="UniProtKB-UniRule"/>
</dbReference>
<dbReference type="GO" id="GO:0000105">
    <property type="term" value="P:L-histidine biosynthetic process"/>
    <property type="evidence" value="ECO:0007669"/>
    <property type="project" value="UniProtKB-KW"/>
</dbReference>
<dbReference type="GO" id="GO:0009086">
    <property type="term" value="P:methionine biosynthetic process"/>
    <property type="evidence" value="ECO:0007669"/>
    <property type="project" value="UniProtKB-KW"/>
</dbReference>
<dbReference type="GO" id="GO:0006164">
    <property type="term" value="P:purine nucleotide biosynthetic process"/>
    <property type="evidence" value="ECO:0007669"/>
    <property type="project" value="UniProtKB-KW"/>
</dbReference>
<dbReference type="GO" id="GO:0035999">
    <property type="term" value="P:tetrahydrofolate interconversion"/>
    <property type="evidence" value="ECO:0007669"/>
    <property type="project" value="UniProtKB-UniRule"/>
</dbReference>
<dbReference type="CDD" id="cd01080">
    <property type="entry name" value="NAD_bind_m-THF_DH_Cyclohyd"/>
    <property type="match status" value="1"/>
</dbReference>
<dbReference type="FunFam" id="3.40.50.720:FF:000006">
    <property type="entry name" value="Bifunctional protein FolD"/>
    <property type="match status" value="1"/>
</dbReference>
<dbReference type="FunFam" id="3.40.50.10860:FF:000005">
    <property type="entry name" value="C-1-tetrahydrofolate synthase, cytoplasmic, putative"/>
    <property type="match status" value="1"/>
</dbReference>
<dbReference type="Gene3D" id="3.40.50.10860">
    <property type="entry name" value="Leucine Dehydrogenase, chain A, domain 1"/>
    <property type="match status" value="1"/>
</dbReference>
<dbReference type="Gene3D" id="3.40.50.720">
    <property type="entry name" value="NAD(P)-binding Rossmann-like Domain"/>
    <property type="match status" value="1"/>
</dbReference>
<dbReference type="HAMAP" id="MF_01576">
    <property type="entry name" value="THF_DHG_CYH"/>
    <property type="match status" value="1"/>
</dbReference>
<dbReference type="InterPro" id="IPR046346">
    <property type="entry name" value="Aminoacid_DH-like_N_sf"/>
</dbReference>
<dbReference type="InterPro" id="IPR036291">
    <property type="entry name" value="NAD(P)-bd_dom_sf"/>
</dbReference>
<dbReference type="InterPro" id="IPR000672">
    <property type="entry name" value="THF_DH/CycHdrlase"/>
</dbReference>
<dbReference type="InterPro" id="IPR020630">
    <property type="entry name" value="THF_DH/CycHdrlase_cat_dom"/>
</dbReference>
<dbReference type="InterPro" id="IPR020867">
    <property type="entry name" value="THF_DH/CycHdrlase_CS"/>
</dbReference>
<dbReference type="InterPro" id="IPR020631">
    <property type="entry name" value="THF_DH/CycHdrlase_NAD-bd_dom"/>
</dbReference>
<dbReference type="NCBIfam" id="NF010784">
    <property type="entry name" value="PRK14187.1"/>
    <property type="match status" value="1"/>
</dbReference>
<dbReference type="PANTHER" id="PTHR48099:SF5">
    <property type="entry name" value="C-1-TETRAHYDROFOLATE SYNTHASE, CYTOPLASMIC"/>
    <property type="match status" value="1"/>
</dbReference>
<dbReference type="PANTHER" id="PTHR48099">
    <property type="entry name" value="C-1-TETRAHYDROFOLATE SYNTHASE, CYTOPLASMIC-RELATED"/>
    <property type="match status" value="1"/>
</dbReference>
<dbReference type="Pfam" id="PF00763">
    <property type="entry name" value="THF_DHG_CYH"/>
    <property type="match status" value="1"/>
</dbReference>
<dbReference type="Pfam" id="PF02882">
    <property type="entry name" value="THF_DHG_CYH_C"/>
    <property type="match status" value="1"/>
</dbReference>
<dbReference type="PRINTS" id="PR00085">
    <property type="entry name" value="THFDHDRGNASE"/>
</dbReference>
<dbReference type="SUPFAM" id="SSF53223">
    <property type="entry name" value="Aminoacid dehydrogenase-like, N-terminal domain"/>
    <property type="match status" value="1"/>
</dbReference>
<dbReference type="SUPFAM" id="SSF51735">
    <property type="entry name" value="NAD(P)-binding Rossmann-fold domains"/>
    <property type="match status" value="1"/>
</dbReference>
<dbReference type="PROSITE" id="PS00766">
    <property type="entry name" value="THF_DHG_CYH_1"/>
    <property type="match status" value="1"/>
</dbReference>
<dbReference type="PROSITE" id="PS00767">
    <property type="entry name" value="THF_DHG_CYH_2"/>
    <property type="match status" value="1"/>
</dbReference>
<organism>
    <name type="scientific">Wolbachia sp. subsp. Brugia malayi (strain TRS)</name>
    <dbReference type="NCBI Taxonomy" id="292805"/>
    <lineage>
        <taxon>Bacteria</taxon>
        <taxon>Pseudomonadati</taxon>
        <taxon>Pseudomonadota</taxon>
        <taxon>Alphaproteobacteria</taxon>
        <taxon>Rickettsiales</taxon>
        <taxon>Anaplasmataceae</taxon>
        <taxon>Wolbachieae</taxon>
        <taxon>Wolbachia</taxon>
    </lineage>
</organism>
<gene>
    <name evidence="1" type="primary">folD</name>
    <name type="ordered locus">Wbm0073</name>
</gene>
<sequence>MTIIIDGKKIASGLCEKLSQRIDVLKREHSIFPCLKVIFVGNNPASQVYVRNKQKKAESIGISSETIVLPDNILENELIEKINELNNDRFVNGILVQLPLPNHINASKVINTVSVEKDVDAFHRENVGKLVKGEKNCLVPCTPKGALHLIKLVETNLSGKNAVVIGRSNIVGKPMFHLLLQENCTVTILHSQSKDLAEYCSKADVVVTAVGKPNFVQEGWIKEGAIVIDVGINSVSIEGKTKLIGDVDFDRVKEKTKAITPVPGGVGPMTIAFLMINTVIAACLQKKVDASDFVS</sequence>
<proteinExistence type="inferred from homology"/>
<evidence type="ECO:0000255" key="1">
    <source>
        <dbReference type="HAMAP-Rule" id="MF_01576"/>
    </source>
</evidence>
<reference key="1">
    <citation type="journal article" date="2005" name="PLoS Biol.">
        <title>The Wolbachia genome of Brugia malayi: endosymbiont evolution within a human pathogenic nematode.</title>
        <authorList>
            <person name="Foster J."/>
            <person name="Ganatra M."/>
            <person name="Kamal I."/>
            <person name="Ware J."/>
            <person name="Makarova K."/>
            <person name="Ivanova N."/>
            <person name="Bhattacharyya A."/>
            <person name="Kapatral V."/>
            <person name="Kumar S."/>
            <person name="Posfai J."/>
            <person name="Vincze T."/>
            <person name="Ingram J."/>
            <person name="Moran L."/>
            <person name="Lapidus A."/>
            <person name="Omelchenko M."/>
            <person name="Kyrpides N."/>
            <person name="Ghedin E."/>
            <person name="Wang S."/>
            <person name="Goltsman E."/>
            <person name="Joukov V."/>
            <person name="Ostrovskaya O."/>
            <person name="Tsukerman K."/>
            <person name="Mazur M."/>
            <person name="Comb D."/>
            <person name="Koonin E."/>
            <person name="Slatko B."/>
        </authorList>
    </citation>
    <scope>NUCLEOTIDE SEQUENCE [LARGE SCALE GENOMIC DNA]</scope>
    <source>
        <strain>TRS</strain>
    </source>
</reference>
<accession>Q5GTK9</accession>
<name>FOLD_WOLTR</name>
<feature type="chain" id="PRO_0000268563" description="Bifunctional protein FolD">
    <location>
        <begin position="1"/>
        <end position="295"/>
    </location>
</feature>
<feature type="binding site" evidence="1">
    <location>
        <begin position="166"/>
        <end position="168"/>
    </location>
    <ligand>
        <name>NADP(+)</name>
        <dbReference type="ChEBI" id="CHEBI:58349"/>
    </ligand>
</feature>
<feature type="binding site" evidence="1">
    <location>
        <position position="191"/>
    </location>
    <ligand>
        <name>NADP(+)</name>
        <dbReference type="ChEBI" id="CHEBI:58349"/>
    </ligand>
</feature>
<feature type="binding site" evidence="1">
    <location>
        <position position="232"/>
    </location>
    <ligand>
        <name>NADP(+)</name>
        <dbReference type="ChEBI" id="CHEBI:58349"/>
    </ligand>
</feature>
<keyword id="KW-0028">Amino-acid biosynthesis</keyword>
<keyword id="KW-0368">Histidine biosynthesis</keyword>
<keyword id="KW-0378">Hydrolase</keyword>
<keyword id="KW-0486">Methionine biosynthesis</keyword>
<keyword id="KW-0511">Multifunctional enzyme</keyword>
<keyword id="KW-0521">NADP</keyword>
<keyword id="KW-0554">One-carbon metabolism</keyword>
<keyword id="KW-0560">Oxidoreductase</keyword>
<keyword id="KW-0658">Purine biosynthesis</keyword>
<keyword id="KW-1185">Reference proteome</keyword>
<comment type="function">
    <text evidence="1">Catalyzes the oxidation of 5,10-methylenetetrahydrofolate to 5,10-methenyltetrahydrofolate and then the hydrolysis of 5,10-methenyltetrahydrofolate to 10-formyltetrahydrofolate.</text>
</comment>
<comment type="catalytic activity">
    <reaction evidence="1">
        <text>(6R)-5,10-methylene-5,6,7,8-tetrahydrofolate + NADP(+) = (6R)-5,10-methenyltetrahydrofolate + NADPH</text>
        <dbReference type="Rhea" id="RHEA:22812"/>
        <dbReference type="ChEBI" id="CHEBI:15636"/>
        <dbReference type="ChEBI" id="CHEBI:57455"/>
        <dbReference type="ChEBI" id="CHEBI:57783"/>
        <dbReference type="ChEBI" id="CHEBI:58349"/>
        <dbReference type="EC" id="1.5.1.5"/>
    </reaction>
</comment>
<comment type="catalytic activity">
    <reaction evidence="1">
        <text>(6R)-5,10-methenyltetrahydrofolate + H2O = (6R)-10-formyltetrahydrofolate + H(+)</text>
        <dbReference type="Rhea" id="RHEA:23700"/>
        <dbReference type="ChEBI" id="CHEBI:15377"/>
        <dbReference type="ChEBI" id="CHEBI:15378"/>
        <dbReference type="ChEBI" id="CHEBI:57455"/>
        <dbReference type="ChEBI" id="CHEBI:195366"/>
        <dbReference type="EC" id="3.5.4.9"/>
    </reaction>
</comment>
<comment type="pathway">
    <text evidence="1">One-carbon metabolism; tetrahydrofolate interconversion.</text>
</comment>
<comment type="subunit">
    <text evidence="1">Homodimer.</text>
</comment>
<comment type="similarity">
    <text evidence="1">Belongs to the tetrahydrofolate dehydrogenase/cyclohydrolase family.</text>
</comment>